<feature type="chain" id="PRO_0000195306" description="Glucose-1-phosphate adenylyltransferase">
    <location>
        <begin position="1"/>
        <end position="404"/>
    </location>
</feature>
<feature type="binding site" evidence="1">
    <location>
        <position position="99"/>
    </location>
    <ligand>
        <name>alpha-D-glucose 1-phosphate</name>
        <dbReference type="ChEBI" id="CHEBI:58601"/>
    </ligand>
</feature>
<feature type="binding site" evidence="1">
    <location>
        <position position="164"/>
    </location>
    <ligand>
        <name>alpha-D-glucose 1-phosphate</name>
        <dbReference type="ChEBI" id="CHEBI:58601"/>
    </ligand>
</feature>
<feature type="binding site" evidence="1">
    <location>
        <begin position="179"/>
        <end position="180"/>
    </location>
    <ligand>
        <name>alpha-D-glucose 1-phosphate</name>
        <dbReference type="ChEBI" id="CHEBI:58601"/>
    </ligand>
</feature>
<feature type="binding site" evidence="1">
    <location>
        <position position="197"/>
    </location>
    <ligand>
        <name>alpha-D-glucose 1-phosphate</name>
        <dbReference type="ChEBI" id="CHEBI:58601"/>
    </ligand>
</feature>
<dbReference type="EC" id="2.7.7.27" evidence="1"/>
<dbReference type="EMBL" id="U15180">
    <property type="protein sequence ID" value="AAA62917.1"/>
    <property type="status" value="ALT_INIT"/>
    <property type="molecule type" value="Genomic_DNA"/>
</dbReference>
<dbReference type="EMBL" id="AL583920">
    <property type="protein sequence ID" value="CAC31450.1"/>
    <property type="molecule type" value="Genomic_DNA"/>
</dbReference>
<dbReference type="PIR" id="G87042">
    <property type="entry name" value="G87042"/>
</dbReference>
<dbReference type="PIR" id="T45186">
    <property type="entry name" value="T45186"/>
</dbReference>
<dbReference type="RefSeq" id="NP_301786.1">
    <property type="nucleotide sequence ID" value="NC_002677.1"/>
</dbReference>
<dbReference type="RefSeq" id="WP_010908110.1">
    <property type="nucleotide sequence ID" value="NC_002677.1"/>
</dbReference>
<dbReference type="SMR" id="Q9CCA8"/>
<dbReference type="STRING" id="272631.gene:17574895"/>
<dbReference type="KEGG" id="mle:ML1069"/>
<dbReference type="PATRIC" id="fig|272631.5.peg.1918"/>
<dbReference type="Leproma" id="ML1069"/>
<dbReference type="eggNOG" id="COG0448">
    <property type="taxonomic scope" value="Bacteria"/>
</dbReference>
<dbReference type="HOGENOM" id="CLU_029499_14_1_11"/>
<dbReference type="OrthoDB" id="9801810at2"/>
<dbReference type="UniPathway" id="UPA00164"/>
<dbReference type="UniPathway" id="UPA00934"/>
<dbReference type="Proteomes" id="UP000000806">
    <property type="component" value="Chromosome"/>
</dbReference>
<dbReference type="GO" id="GO:0005524">
    <property type="term" value="F:ATP binding"/>
    <property type="evidence" value="ECO:0007669"/>
    <property type="project" value="UniProtKB-KW"/>
</dbReference>
<dbReference type="GO" id="GO:0008878">
    <property type="term" value="F:glucose-1-phosphate adenylyltransferase activity"/>
    <property type="evidence" value="ECO:0007669"/>
    <property type="project" value="UniProtKB-UniRule"/>
</dbReference>
<dbReference type="GO" id="GO:0045227">
    <property type="term" value="P:capsule polysaccharide biosynthetic process"/>
    <property type="evidence" value="ECO:0007669"/>
    <property type="project" value="UniProtKB-UniPathway"/>
</dbReference>
<dbReference type="GO" id="GO:0005978">
    <property type="term" value="P:glycogen biosynthetic process"/>
    <property type="evidence" value="ECO:0007669"/>
    <property type="project" value="UniProtKB-UniRule"/>
</dbReference>
<dbReference type="CDD" id="cd02508">
    <property type="entry name" value="ADP_Glucose_PP"/>
    <property type="match status" value="1"/>
</dbReference>
<dbReference type="CDD" id="cd04651">
    <property type="entry name" value="LbH_G1P_AT_C"/>
    <property type="match status" value="1"/>
</dbReference>
<dbReference type="FunFam" id="3.90.550.10:FF:000014">
    <property type="entry name" value="Glucose-1-phosphate adenylyltransferase"/>
    <property type="match status" value="1"/>
</dbReference>
<dbReference type="Gene3D" id="2.160.10.10">
    <property type="entry name" value="Hexapeptide repeat proteins"/>
    <property type="match status" value="1"/>
</dbReference>
<dbReference type="Gene3D" id="3.90.550.10">
    <property type="entry name" value="Spore Coat Polysaccharide Biosynthesis Protein SpsA, Chain A"/>
    <property type="match status" value="1"/>
</dbReference>
<dbReference type="HAMAP" id="MF_00624">
    <property type="entry name" value="GlgC"/>
    <property type="match status" value="1"/>
</dbReference>
<dbReference type="InterPro" id="IPR011831">
    <property type="entry name" value="ADP-Glc_PPase"/>
</dbReference>
<dbReference type="InterPro" id="IPR005836">
    <property type="entry name" value="ADP_Glu_pyroP_CS"/>
</dbReference>
<dbReference type="InterPro" id="IPR023049">
    <property type="entry name" value="GlgC_bac"/>
</dbReference>
<dbReference type="InterPro" id="IPR056818">
    <property type="entry name" value="GlmU/GlgC-like_hexapep"/>
</dbReference>
<dbReference type="InterPro" id="IPR005835">
    <property type="entry name" value="NTP_transferase_dom"/>
</dbReference>
<dbReference type="InterPro" id="IPR029044">
    <property type="entry name" value="Nucleotide-diphossugar_trans"/>
</dbReference>
<dbReference type="InterPro" id="IPR011004">
    <property type="entry name" value="Trimer_LpxA-like_sf"/>
</dbReference>
<dbReference type="NCBIfam" id="TIGR02091">
    <property type="entry name" value="glgC"/>
    <property type="match status" value="1"/>
</dbReference>
<dbReference type="NCBIfam" id="NF001947">
    <property type="entry name" value="PRK00725.1"/>
    <property type="match status" value="1"/>
</dbReference>
<dbReference type="NCBIfam" id="NF002023">
    <property type="entry name" value="PRK00844.1"/>
    <property type="match status" value="1"/>
</dbReference>
<dbReference type="PANTHER" id="PTHR43523:SF2">
    <property type="entry name" value="GLUCOSE-1-PHOSPHATE ADENYLYLTRANSFERASE"/>
    <property type="match status" value="1"/>
</dbReference>
<dbReference type="PANTHER" id="PTHR43523">
    <property type="entry name" value="GLUCOSE-1-PHOSPHATE ADENYLYLTRANSFERASE-RELATED"/>
    <property type="match status" value="1"/>
</dbReference>
<dbReference type="Pfam" id="PF24894">
    <property type="entry name" value="Hexapep_GlmU"/>
    <property type="match status" value="1"/>
</dbReference>
<dbReference type="Pfam" id="PF00483">
    <property type="entry name" value="NTP_transferase"/>
    <property type="match status" value="1"/>
</dbReference>
<dbReference type="SUPFAM" id="SSF53448">
    <property type="entry name" value="Nucleotide-diphospho-sugar transferases"/>
    <property type="match status" value="1"/>
</dbReference>
<dbReference type="SUPFAM" id="SSF51161">
    <property type="entry name" value="Trimeric LpxA-like enzymes"/>
    <property type="match status" value="1"/>
</dbReference>
<dbReference type="PROSITE" id="PS00808">
    <property type="entry name" value="ADP_GLC_PYROPHOSPH_1"/>
    <property type="match status" value="1"/>
</dbReference>
<dbReference type="PROSITE" id="PS00809">
    <property type="entry name" value="ADP_GLC_PYROPHOSPH_2"/>
    <property type="match status" value="1"/>
</dbReference>
<dbReference type="PROSITE" id="PS00810">
    <property type="entry name" value="ADP_GLC_PYROPHOSPH_3"/>
    <property type="match status" value="1"/>
</dbReference>
<accession>Q9CCA8</accession>
<accession>Q49961</accession>
<keyword id="KW-0067">ATP-binding</keyword>
<keyword id="KW-0119">Carbohydrate metabolism</keyword>
<keyword id="KW-0320">Glycogen biosynthesis</keyword>
<keyword id="KW-0321">Glycogen metabolism</keyword>
<keyword id="KW-0547">Nucleotide-binding</keyword>
<keyword id="KW-0548">Nucleotidyltransferase</keyword>
<keyword id="KW-1185">Reference proteome</keyword>
<keyword id="KW-0808">Transferase</keyword>
<proteinExistence type="inferred from homology"/>
<reference key="1">
    <citation type="submission" date="1994-09" db="EMBL/GenBank/DDBJ databases">
        <authorList>
            <person name="Smith D.R."/>
            <person name="Robison K."/>
        </authorList>
    </citation>
    <scope>NUCLEOTIDE SEQUENCE [GENOMIC DNA]</scope>
</reference>
<reference key="2">
    <citation type="journal article" date="2001" name="Nature">
        <title>Massive gene decay in the leprosy bacillus.</title>
        <authorList>
            <person name="Cole S.T."/>
            <person name="Eiglmeier K."/>
            <person name="Parkhill J."/>
            <person name="James K.D."/>
            <person name="Thomson N.R."/>
            <person name="Wheeler P.R."/>
            <person name="Honore N."/>
            <person name="Garnier T."/>
            <person name="Churcher C.M."/>
            <person name="Harris D.E."/>
            <person name="Mungall K.L."/>
            <person name="Basham D."/>
            <person name="Brown D."/>
            <person name="Chillingworth T."/>
            <person name="Connor R."/>
            <person name="Davies R.M."/>
            <person name="Devlin K."/>
            <person name="Duthoy S."/>
            <person name="Feltwell T."/>
            <person name="Fraser A."/>
            <person name="Hamlin N."/>
            <person name="Holroyd S."/>
            <person name="Hornsby T."/>
            <person name="Jagels K."/>
            <person name="Lacroix C."/>
            <person name="Maclean J."/>
            <person name="Moule S."/>
            <person name="Murphy L.D."/>
            <person name="Oliver K."/>
            <person name="Quail M.A."/>
            <person name="Rajandream M.A."/>
            <person name="Rutherford K.M."/>
            <person name="Rutter S."/>
            <person name="Seeger K."/>
            <person name="Simon S."/>
            <person name="Simmonds M."/>
            <person name="Skelton J."/>
            <person name="Squares R."/>
            <person name="Squares S."/>
            <person name="Stevens K."/>
            <person name="Taylor K."/>
            <person name="Whitehead S."/>
            <person name="Woodward J.R."/>
            <person name="Barrell B.G."/>
        </authorList>
    </citation>
    <scope>NUCLEOTIDE SEQUENCE [LARGE SCALE GENOMIC DNA]</scope>
    <source>
        <strain>TN</strain>
    </source>
</reference>
<sequence>MREVPQVLGIVLAGGEGKRLYPLTADRAKPAVPFGGAYRLVDFVLSNLVNARYLRICVLTQYKSHSLDRHISQNWRLSGLAGEYITPVPAQQRFGPHWYTGSADAIYQSLNLIYDEDPDYLVVFGADHVYRMDPEQMLRFHIGSGAGATVAGIRVPRSDATAFGCIDADDSGRIRRFTEKPLKPPGTPDDPDKTFVSMGNYIFTTKVLVDAIRADADDDHSYHDMGGDILPRLVDGGMAAVYDFSQNEVPGATDWDRAYWRDVGTLDAFYDAHMDLVSLRPVFNLYNKRWPIRGESENLAPAKFVNGGSVQESVVGAGSIISAASVRNSVLSSNVVVDNGAIVEGSVIMPGARVGRGAVIRHAILDKNVVVGPGEMVGVDPERDREHFAISAGGVVVVGKGVWI</sequence>
<name>GLGC_MYCLE</name>
<organism>
    <name type="scientific">Mycobacterium leprae (strain TN)</name>
    <dbReference type="NCBI Taxonomy" id="272631"/>
    <lineage>
        <taxon>Bacteria</taxon>
        <taxon>Bacillati</taxon>
        <taxon>Actinomycetota</taxon>
        <taxon>Actinomycetes</taxon>
        <taxon>Mycobacteriales</taxon>
        <taxon>Mycobacteriaceae</taxon>
        <taxon>Mycobacterium</taxon>
    </lineage>
</organism>
<protein>
    <recommendedName>
        <fullName evidence="1">Glucose-1-phosphate adenylyltransferase</fullName>
        <ecNumber evidence="1">2.7.7.27</ecNumber>
    </recommendedName>
    <alternativeName>
        <fullName evidence="1">ADP-glucose pyrophosphorylase</fullName>
        <shortName evidence="1">ADPGlc PPase</shortName>
    </alternativeName>
    <alternativeName>
        <fullName evidence="1">ADP-glucose synthase</fullName>
    </alternativeName>
</protein>
<evidence type="ECO:0000255" key="1">
    <source>
        <dbReference type="HAMAP-Rule" id="MF_00624"/>
    </source>
</evidence>
<evidence type="ECO:0000305" key="2"/>
<comment type="function">
    <text evidence="1">Involved in the biosynthesis of ADP-glucose, a building block, required in the biosynthesis of maltose-1-phosphate (M1P) and in the elongation reactions to produce linear alpha-1,4-glucans. Catalyzes the reaction between ATP and alpha-D-glucose 1-phosphate (G1P) to produce pyrophosphate and ADP-Glc.</text>
</comment>
<comment type="catalytic activity">
    <reaction evidence="1">
        <text>alpha-D-glucose 1-phosphate + ATP + H(+) = ADP-alpha-D-glucose + diphosphate</text>
        <dbReference type="Rhea" id="RHEA:12120"/>
        <dbReference type="ChEBI" id="CHEBI:15378"/>
        <dbReference type="ChEBI" id="CHEBI:30616"/>
        <dbReference type="ChEBI" id="CHEBI:33019"/>
        <dbReference type="ChEBI" id="CHEBI:57498"/>
        <dbReference type="ChEBI" id="CHEBI:58601"/>
        <dbReference type="EC" id="2.7.7.27"/>
    </reaction>
</comment>
<comment type="pathway">
    <text evidence="2">Capsule biogenesis; capsule polysaccharide biosynthesis.</text>
</comment>
<comment type="pathway">
    <text evidence="1">Glycan biosynthesis; glycogen biosynthesis.</text>
</comment>
<comment type="similarity">
    <text evidence="1">Belongs to the bacterial/plant glucose-1-phosphate adenylyltransferase family.</text>
</comment>
<comment type="sequence caution" evidence="2">
    <conflict type="erroneous initiation">
        <sequence resource="EMBL-CDS" id="AAA62917"/>
    </conflict>
</comment>
<gene>
    <name evidence="1" type="primary">glgC</name>
    <name type="ordered locus">ML1069</name>
</gene>